<name>Y2058_ACTP7</name>
<proteinExistence type="inferred from homology"/>
<reference key="1">
    <citation type="submission" date="2008-06" db="EMBL/GenBank/DDBJ databases">
        <title>Genome and proteome analysis of A. pleuropneumoniae serotype 7.</title>
        <authorList>
            <person name="Linke B."/>
            <person name="Buettner F."/>
            <person name="Martinez-Arias R."/>
            <person name="Goesmann A."/>
            <person name="Baltes N."/>
            <person name="Tegetmeyer H."/>
            <person name="Singh M."/>
            <person name="Gerlach G.F."/>
        </authorList>
    </citation>
    <scope>NUCLEOTIDE SEQUENCE [LARGE SCALE GENOMIC DNA]</scope>
    <source>
        <strain>AP76</strain>
    </source>
</reference>
<accession>B3H340</accession>
<gene>
    <name type="ordered locus">APP7_2058</name>
</gene>
<comment type="similarity">
    <text evidence="2">Belongs to the UPF0758 family.</text>
</comment>
<protein>
    <recommendedName>
        <fullName>UPF0758 protein APP7_2058</fullName>
    </recommendedName>
</protein>
<evidence type="ECO:0000255" key="1">
    <source>
        <dbReference type="PROSITE-ProRule" id="PRU01182"/>
    </source>
</evidence>
<evidence type="ECO:0000305" key="2"/>
<dbReference type="EMBL" id="CP001091">
    <property type="protein sequence ID" value="ACE62710.1"/>
    <property type="molecule type" value="Genomic_DNA"/>
</dbReference>
<dbReference type="SMR" id="B3H340"/>
<dbReference type="KEGG" id="apa:APP7_2058"/>
<dbReference type="HOGENOM" id="CLU_073529_0_1_6"/>
<dbReference type="Proteomes" id="UP000001226">
    <property type="component" value="Chromosome"/>
</dbReference>
<dbReference type="GO" id="GO:0046872">
    <property type="term" value="F:metal ion binding"/>
    <property type="evidence" value="ECO:0007669"/>
    <property type="project" value="UniProtKB-KW"/>
</dbReference>
<dbReference type="GO" id="GO:0008237">
    <property type="term" value="F:metallopeptidase activity"/>
    <property type="evidence" value="ECO:0007669"/>
    <property type="project" value="UniProtKB-KW"/>
</dbReference>
<dbReference type="GO" id="GO:0006508">
    <property type="term" value="P:proteolysis"/>
    <property type="evidence" value="ECO:0007669"/>
    <property type="project" value="UniProtKB-KW"/>
</dbReference>
<dbReference type="CDD" id="cd08071">
    <property type="entry name" value="MPN_DUF2466"/>
    <property type="match status" value="1"/>
</dbReference>
<dbReference type="Gene3D" id="3.40.140.10">
    <property type="entry name" value="Cytidine Deaminase, domain 2"/>
    <property type="match status" value="1"/>
</dbReference>
<dbReference type="InterPro" id="IPR037518">
    <property type="entry name" value="MPN"/>
</dbReference>
<dbReference type="InterPro" id="IPR025657">
    <property type="entry name" value="RadC_JAB"/>
</dbReference>
<dbReference type="InterPro" id="IPR010994">
    <property type="entry name" value="RuvA_2-like"/>
</dbReference>
<dbReference type="InterPro" id="IPR001405">
    <property type="entry name" value="UPF0758"/>
</dbReference>
<dbReference type="InterPro" id="IPR020891">
    <property type="entry name" value="UPF0758_CS"/>
</dbReference>
<dbReference type="InterPro" id="IPR046778">
    <property type="entry name" value="UPF0758_N"/>
</dbReference>
<dbReference type="NCBIfam" id="NF000642">
    <property type="entry name" value="PRK00024.1"/>
    <property type="match status" value="1"/>
</dbReference>
<dbReference type="NCBIfam" id="TIGR00608">
    <property type="entry name" value="radc"/>
    <property type="match status" value="1"/>
</dbReference>
<dbReference type="PANTHER" id="PTHR30471">
    <property type="entry name" value="DNA REPAIR PROTEIN RADC"/>
    <property type="match status" value="1"/>
</dbReference>
<dbReference type="PANTHER" id="PTHR30471:SF3">
    <property type="entry name" value="UPF0758 PROTEIN YEES-RELATED"/>
    <property type="match status" value="1"/>
</dbReference>
<dbReference type="Pfam" id="PF04002">
    <property type="entry name" value="RadC"/>
    <property type="match status" value="1"/>
</dbReference>
<dbReference type="Pfam" id="PF20582">
    <property type="entry name" value="UPF0758_N"/>
    <property type="match status" value="1"/>
</dbReference>
<dbReference type="SUPFAM" id="SSF102712">
    <property type="entry name" value="JAB1/MPN domain"/>
    <property type="match status" value="1"/>
</dbReference>
<dbReference type="SUPFAM" id="SSF47781">
    <property type="entry name" value="RuvA domain 2-like"/>
    <property type="match status" value="1"/>
</dbReference>
<dbReference type="PROSITE" id="PS50249">
    <property type="entry name" value="MPN"/>
    <property type="match status" value="1"/>
</dbReference>
<dbReference type="PROSITE" id="PS01302">
    <property type="entry name" value="UPF0758"/>
    <property type="match status" value="1"/>
</dbReference>
<feature type="chain" id="PRO_1000089785" description="UPF0758 protein APP7_2058">
    <location>
        <begin position="1"/>
        <end position="220"/>
    </location>
</feature>
<feature type="domain" description="MPN" evidence="1">
    <location>
        <begin position="98"/>
        <end position="220"/>
    </location>
</feature>
<feature type="short sequence motif" description="JAMM motif" evidence="1">
    <location>
        <begin position="169"/>
        <end position="182"/>
    </location>
</feature>
<feature type="binding site" evidence="1">
    <location>
        <position position="169"/>
    </location>
    <ligand>
        <name>Zn(2+)</name>
        <dbReference type="ChEBI" id="CHEBI:29105"/>
        <note>catalytic</note>
    </ligand>
</feature>
<feature type="binding site" evidence="1">
    <location>
        <position position="171"/>
    </location>
    <ligand>
        <name>Zn(2+)</name>
        <dbReference type="ChEBI" id="CHEBI:29105"/>
        <note>catalytic</note>
    </ligand>
</feature>
<feature type="binding site" evidence="1">
    <location>
        <position position="182"/>
    </location>
    <ligand>
        <name>Zn(2+)</name>
        <dbReference type="ChEBI" id="CHEBI:29105"/>
        <note>catalytic</note>
    </ligand>
</feature>
<sequence length="220" mass="25014">MDNVVLMPREKLLASGAESLTDQELLAIFLRTGIKGMPVMQLSQEVLNGFGSLRELLSADLATFCRMKGLGQTQFIQLQASKEMTKRYLAQQMQVRENINEPYLAVMCFQAELESEEREVFMVMFLDNQNRLIKKEKMFYGTINQATVYPREIIKEALKCNAAAIIVAHNHPSGNCTPSESDRALTKKLEMACDLVGIRFVDHIVVGKGDYFSFEEEKFR</sequence>
<organism>
    <name type="scientific">Actinobacillus pleuropneumoniae serotype 7 (strain AP76)</name>
    <dbReference type="NCBI Taxonomy" id="537457"/>
    <lineage>
        <taxon>Bacteria</taxon>
        <taxon>Pseudomonadati</taxon>
        <taxon>Pseudomonadota</taxon>
        <taxon>Gammaproteobacteria</taxon>
        <taxon>Pasteurellales</taxon>
        <taxon>Pasteurellaceae</taxon>
        <taxon>Actinobacillus</taxon>
    </lineage>
</organism>
<keyword id="KW-0378">Hydrolase</keyword>
<keyword id="KW-0479">Metal-binding</keyword>
<keyword id="KW-0482">Metalloprotease</keyword>
<keyword id="KW-0645">Protease</keyword>
<keyword id="KW-0862">Zinc</keyword>